<comment type="function">
    <text>Capsid protein VP2 self assembles to form an icosahedral capsid with a T=13 symmetry, about 70 nm in diameter, and consisting of 260 VP2 trimers. The capsid encapsulates the genomic dsRNA. VP2 is also involved in attachment and entry into the host cell.</text>
</comment>
<comment type="function">
    <text evidence="1">The precursor of VP2 plays an important role in capsid assembly. First, pre-VP2 and VP2 oligomers assemble to form a procapsid. Then, the pre-VP2 intermediates may be processed into VP2 proteins by proteolytic cleavage mediated by VP4 to obtain the mature virion. The final capsid is composed of pentamers and hexamers but VP2 has a natural tendency to assemble into all-pentameric structures. Therefore pre-VP2 may be required to allow formation of the hexameric structures (By similarity).</text>
</comment>
<comment type="function">
    <text evidence="2">Protease VP4 is a serine protease that cleaves the polyprotein into its final products. Pre-VP2 is first partially cleaved, and may be completely processed by VP4 upon capsid maturation.</text>
</comment>
<comment type="function">
    <text evidence="1">Capsid protein VP3 plays a key role in virion assembly by providing a scaffold for the capsid composed of VP2. May self-assemble to form a T=4-like icosahedral inner-capsid composed of at least 180 trimers. Plays a role in genomic RNA packaging by recruiting VP1 into the capsid and interacting with the dsRNA genome segments to form a ribonucleoprotein complex. Additionally, the interaction of the VP3 C-terminal tail with VP1 removes the inherent structural blockade of the polymerase active site. Thus, VP3 can also function as a transcriptional activator (By similarity).</text>
</comment>
<comment type="function">
    <text evidence="1">Structural peptide 1 is a small peptide derived from the C-terminus of pre-VP2. It destabilizes and perforates cell membranes, suggesting a role during viral entry (By similarity).</text>
</comment>
<comment type="function">
    <text evidence="1">Structural peptide 2 is a small peptide derived from the C-terminus of pre-VP2. It is not essential for virus viability, but viral growth is affected when this protein is absent (By similarity).</text>
</comment>
<comment type="function">
    <text evidence="1">Structural peptide 3 is a small peptide derived from pre-VP2 C-terminus. It is not essential for virus viability, but viral growth is affected when this protein is absent (By similarity).</text>
</comment>
<comment type="subunit">
    <molecule>Capsid protein VP2</molecule>
    <text evidence="4">Homotrimer. A central divalent metal (possibly cobalt) stabilizes the VP2 trimer.</text>
</comment>
<comment type="subunit">
    <molecule>Capsid protein VP3</molecule>
    <text evidence="1">Homodimer. interacts (via C-terminus) with VP1 in the cytoplasm. Interacts with VP2 (By similarity).</text>
</comment>
<comment type="subcellular location">
    <molecule>Capsid protein VP2</molecule>
    <subcellularLocation>
        <location evidence="4">Virion</location>
    </subcellularLocation>
    <subcellularLocation>
        <location evidence="4">Host cytoplasm</location>
    </subcellularLocation>
</comment>
<comment type="subcellular location">
    <molecule>Capsid protein VP3</molecule>
    <subcellularLocation>
        <location evidence="4">Virion</location>
    </subcellularLocation>
    <subcellularLocation>
        <location evidence="4">Host cytoplasm</location>
    </subcellularLocation>
</comment>
<comment type="subcellular location">
    <molecule>Structural peptide 1</molecule>
    <subcellularLocation>
        <location evidence="4">Virion</location>
    </subcellularLocation>
    <subcellularLocation>
        <location evidence="4">Host cytoplasm</location>
    </subcellularLocation>
</comment>
<comment type="subcellular location">
    <molecule>Structural peptide 2</molecule>
    <subcellularLocation>
        <location evidence="4">Virion</location>
    </subcellularLocation>
    <subcellularLocation>
        <location evidence="4">Host cytoplasm</location>
    </subcellularLocation>
</comment>
<comment type="subcellular location">
    <molecule>Structural peptide 3</molecule>
    <subcellularLocation>
        <location evidence="4">Virion</location>
    </subcellularLocation>
    <subcellularLocation>
        <location evidence="4">Host cytoplasm</location>
    </subcellularLocation>
</comment>
<comment type="PTM">
    <text>Specific enzymatic cleavages yield mature proteins. Capsid assembly seems to be regulated by polyprotein processing. The protease VP4 cleaves itself off the polyprotein, thus releasing pre-VP2 and VP3 within the infected cell. During capsid assembly, the C-terminus of pre-VP2 is further processed by VP4, giving rise to VP2, the external capsid protein and three small peptides that all stay closely associated with the capsid.</text>
</comment>
<protein>
    <recommendedName>
        <fullName>Structural polyprotein</fullName>
        <shortName>PP</shortName>
    </recommendedName>
    <component>
        <recommendedName>
            <fullName>Precursor of VP2</fullName>
            <shortName>Pre-VP2</shortName>
        </recommendedName>
    </component>
    <component>
        <recommendedName>
            <fullName>Capsid protein VP2</fullName>
        </recommendedName>
    </component>
    <component>
        <recommendedName>
            <fullName>Structural peptide 1</fullName>
            <shortName>p1</shortName>
        </recommendedName>
    </component>
    <component>
        <recommendedName>
            <fullName>Structural peptide 2</fullName>
            <shortName>p2</shortName>
        </recommendedName>
    </component>
    <component>
        <recommendedName>
            <fullName>Structural peptide 3</fullName>
            <shortName>p3</shortName>
        </recommendedName>
    </component>
    <component>
        <recommendedName>
            <fullName>Protease VP4</fullName>
            <ecNumber>3.4.21.-</ecNumber>
        </recommendedName>
        <alternativeName>
            <fullName>Non-structural protein VP4</fullName>
            <shortName>NS</shortName>
        </alternativeName>
    </component>
    <component>
        <recommendedName>
            <fullName>Capsid protein VP3</fullName>
        </recommendedName>
    </component>
</protein>
<name>POLS_IPNVJ</name>
<accession>P05844</accession>
<accession>Q82720</accession>
<organismHost>
    <name type="scientific">Oncorhynchus mykiss</name>
    <name type="common">Rainbow trout</name>
    <name type="synonym">Salmo gairdneri</name>
    <dbReference type="NCBI Taxonomy" id="8022"/>
</organismHost>
<organismHost>
    <name type="scientific">Salmo</name>
    <dbReference type="NCBI Taxonomy" id="8028"/>
</organismHost>
<proteinExistence type="evidence at protein level"/>
<reference key="1">
    <citation type="journal article" date="1986" name="Nucleic Acids Res.">
        <title>The nucleotide sequence of infectious pancreatic necrosis virus (IPNV) dsRNA segment A reveals one large ORF encoding a precursor polyprotein.</title>
        <authorList>
            <person name="Duncan R."/>
            <person name="Dobos P."/>
        </authorList>
    </citation>
    <scope>NUCLEOTIDE SEQUENCE [GENOMIC RNA]</scope>
</reference>
<reference key="2">
    <citation type="journal article" date="1987" name="J. Virol.">
        <title>Synthesis of the infectious pancreatic necrosis virus polyprotein, detection of a virus-encoded protease, and fine structure mapping of genome segment A coding regions.</title>
        <authorList>
            <person name="Duncan R."/>
            <person name="Nagy E."/>
            <person name="Krell P.J."/>
            <person name="Dobos P."/>
        </authorList>
    </citation>
    <scope>NUCLEOTIDE SEQUENCE [GENOMIC RNA] OF 433-972</scope>
    <scope>SEQUENCE REVISION TO 566 AND 708</scope>
</reference>
<reference key="3">
    <citation type="journal article" date="2010" name="J. Virol.">
        <title>Crystal structure of an aquabirnavirus particle: insights into antigenic diversity and virulence determinism.</title>
        <authorList>
            <person name="Coulibaly F."/>
            <person name="Chevalier C."/>
            <person name="Delmas B."/>
            <person name="Rey F.A."/>
        </authorList>
    </citation>
    <scope>SUBUNIT</scope>
    <scope>STRUCTURE BY ELECTRON MICROSCOPY (3.4 ANGSTROMS) OF SUBVIRAL PARTICLES</scope>
</reference>
<keyword id="KW-0002">3D-structure</keyword>
<keyword id="KW-0167">Capsid protein</keyword>
<keyword id="KW-1035">Host cytoplasm</keyword>
<keyword id="KW-0378">Hydrolase</keyword>
<keyword id="KW-0479">Metal-binding</keyword>
<keyword id="KW-0645">Protease</keyword>
<keyword id="KW-1185">Reference proteome</keyword>
<keyword id="KW-0720">Serine protease</keyword>
<keyword id="KW-1146">T=13 icosahedral capsid protein</keyword>
<keyword id="KW-0946">Virion</keyword>
<organism>
    <name type="scientific">Infectious pancreatic necrosis virus (strain Jasper)</name>
    <name type="common">IPNV</name>
    <dbReference type="NCBI Taxonomy" id="11003"/>
    <lineage>
        <taxon>Viruses</taxon>
        <taxon>Riboviria</taxon>
        <taxon>Orthornavirae</taxon>
        <taxon>Birnaviridae</taxon>
        <taxon>Aquabirnavirus</taxon>
        <taxon>Aquabirnavirus salmonidae</taxon>
    </lineage>
</organism>
<sequence>MSTSKATATYLRSIMLPENGPASIPDDITERHILKQETSSYNLEVSESGSGLLVCFPGAPGSRVGAHYRWNLNQTALEFDQWLETSQDLKKAFNYGRLISRKYDIQSSTLPAGLYALNGTLNAATFEGSLSEVESLTYNSLMSLTTNPQDKVNNQLVTKGITVLNLPTGFDKPYVRLEDETPQGPQSMNGARMRCTAAIAPRRYEIDLPSERLPTVAATGTPTTIYEGNADIVNSTAVTGDITFQLEAEPVNETRFDFILQFLGLDNDVPVVTVTSSTLVTADNYRGASAKFTQSIPTEMITKPITRVKLAYQLNQQTAIANAATLGAKGPASVSFSSGNGNVPGVLRPITLVAYEKMTPQSILTVAGVSNYELIPNPDLLKNMVTKYGKYDPEGLNYAKMILSHREELDIRTVWRTEEYKERTRAFKEITDFTSDLPTSKAWGWRDLVRGIRKVAAPVLSTLFPMAAPLIGAADQFIGDLTKTNSAGGRYLSHAAGGRYHDVMDSWASGSEAGSYSKHLKTRLESNNYEEVELPKPTKGVIFPVVHTVESAPGEAFGSLVVVIPEAYPELLDPNQQVLSYFKNDTGCVWGIGEDIPFEGDDMCYTALPLKEIKRNGNIVVEKIFAGPAMGPSSQLALSLLVNDIDEGIPRMVFTGEIADDEETVIPICGVDIKAIAAHEHGLPLIGCQPGVDEMVANTSLASHLIQGGALPVQKAQGACRRIKYLGQLMRTTASGMDAELQGLLQATMARAKEVKDAEVFKLLKLMSWTRKNDLTDHMYEWSKEDPDAIKFGRLVSTPPKHQEKPKGPDQHTAQEAKATRISLDAVKAGADFASPEWIAENNYRGPSPGQFKYYMITGRVPNPGEEYEDYVRKPITRPTDMDKIRRLANSVYGLPHQEPAPDDFYQAVVEVFAENGGRGPDQDQMQDLRDLARQMKRRPRPAETRRQTKTPPRAATSSGSRFTPSGDDGEV</sequence>
<evidence type="ECO:0000250" key="1"/>
<evidence type="ECO:0000255" key="2">
    <source>
        <dbReference type="PROSITE-ProRule" id="PRU00881"/>
    </source>
</evidence>
<evidence type="ECO:0000256" key="3">
    <source>
        <dbReference type="SAM" id="MobiDB-lite"/>
    </source>
</evidence>
<evidence type="ECO:0000305" key="4"/>
<evidence type="ECO:0007829" key="5">
    <source>
        <dbReference type="PDB" id="3ZED"/>
    </source>
</evidence>
<feature type="chain" id="PRO_0000391632" description="Structural polyprotein">
    <location>
        <begin position="1"/>
        <end position="972"/>
    </location>
</feature>
<feature type="chain" id="PRO_0000391633" description="Precursor of VP2">
    <location>
        <begin position="1"/>
        <end position="508"/>
    </location>
</feature>
<feature type="chain" id="PRO_0000036780" description="Capsid protein VP2">
    <location>
        <begin position="1"/>
        <end position="442"/>
    </location>
</feature>
<feature type="peptide" id="PRO_0000227859" description="Structural peptide 1" evidence="1">
    <location>
        <begin position="443"/>
        <end position="486"/>
    </location>
</feature>
<feature type="peptide" id="PRO_0000227860" description="Structural peptide 2" evidence="1">
    <location>
        <begin position="487"/>
        <end position="495"/>
    </location>
</feature>
<feature type="peptide" id="PRO_0000227861" description="Structural peptide 3" evidence="1">
    <location>
        <begin position="496"/>
        <end position="508"/>
    </location>
</feature>
<feature type="chain" id="PRO_0000036781" description="Protease VP4">
    <location>
        <begin position="509"/>
        <end position="734"/>
    </location>
</feature>
<feature type="chain" id="PRO_0000036782" description="Capsid protein VP3">
    <location>
        <begin position="735"/>
        <end position="972"/>
    </location>
</feature>
<feature type="domain" description="Peptidase S50" evidence="2">
    <location>
        <begin position="509"/>
        <end position="734"/>
    </location>
</feature>
<feature type="region of interest" description="Disordered" evidence="3">
    <location>
        <begin position="797"/>
        <end position="817"/>
    </location>
</feature>
<feature type="region of interest" description="Disordered" evidence="3">
    <location>
        <begin position="917"/>
        <end position="972"/>
    </location>
</feature>
<feature type="compositionally biased region" description="Basic and acidic residues" evidence="3">
    <location>
        <begin position="801"/>
        <end position="817"/>
    </location>
</feature>
<feature type="active site" description="Nucleophile" evidence="2">
    <location>
        <position position="633"/>
    </location>
</feature>
<feature type="active site" evidence="2">
    <location>
        <position position="674"/>
    </location>
</feature>
<feature type="binding site">
    <location>
        <position position="26"/>
    </location>
    <ligand>
        <name>a divalent metal cation</name>
        <dbReference type="ChEBI" id="CHEBI:60240"/>
        <note>ligand shared between trimeric partners</note>
    </ligand>
</feature>
<feature type="site" description="Cleavage; by protease VP4" evidence="1">
    <location>
        <begin position="442"/>
        <end position="443"/>
    </location>
</feature>
<feature type="site" description="Cleavage; by protease VP4" evidence="1">
    <location>
        <begin position="486"/>
        <end position="487"/>
    </location>
</feature>
<feature type="site" description="Cleavage; by protease VP4" evidence="1">
    <location>
        <begin position="495"/>
        <end position="496"/>
    </location>
</feature>
<feature type="site" description="Cleavage; by protease VP4" evidence="1">
    <location>
        <begin position="508"/>
        <end position="509"/>
    </location>
</feature>
<feature type="site" description="Cleavage; by protease VP4" evidence="1">
    <location>
        <begin position="734"/>
        <end position="735"/>
    </location>
</feature>
<feature type="helix" evidence="5">
    <location>
        <begin position="968"/>
        <end position="970"/>
    </location>
</feature>
<dbReference type="EC" id="3.4.21.-"/>
<dbReference type="EMBL" id="M18049">
    <property type="protein sequence ID" value="AAA89179.1"/>
    <property type="molecule type" value="Genomic_RNA"/>
</dbReference>
<dbReference type="PIR" id="A23599">
    <property type="entry name" value="GNXSIV"/>
</dbReference>
<dbReference type="PIR" id="T09624">
    <property type="entry name" value="T09624"/>
</dbReference>
<dbReference type="RefSeq" id="NP_047196.1">
    <property type="nucleotide sequence ID" value="NC_001915.1"/>
</dbReference>
<dbReference type="PDB" id="3ZED">
    <property type="method" value="X-ray"/>
    <property type="resolution" value="2.20 A"/>
    <property type="chains" value="D/E/F=735-972"/>
</dbReference>
<dbReference type="PDBsum" id="3ZED"/>
<dbReference type="SMR" id="P05844"/>
<dbReference type="MEROPS" id="S50.001"/>
<dbReference type="GeneID" id="956513"/>
<dbReference type="KEGG" id="vg:956513"/>
<dbReference type="EvolutionaryTrace" id="P05844"/>
<dbReference type="Proteomes" id="UP000007248">
    <property type="component" value="Genome"/>
</dbReference>
<dbReference type="GO" id="GO:0030430">
    <property type="term" value="C:host cell cytoplasm"/>
    <property type="evidence" value="ECO:0007669"/>
    <property type="project" value="UniProtKB-SubCell"/>
</dbReference>
<dbReference type="GO" id="GO:0039621">
    <property type="term" value="C:T=13 icosahedral viral capsid"/>
    <property type="evidence" value="ECO:0007669"/>
    <property type="project" value="UniProtKB-KW"/>
</dbReference>
<dbReference type="GO" id="GO:0046872">
    <property type="term" value="F:metal ion binding"/>
    <property type="evidence" value="ECO:0007669"/>
    <property type="project" value="UniProtKB-KW"/>
</dbReference>
<dbReference type="GO" id="GO:0008236">
    <property type="term" value="F:serine-type peptidase activity"/>
    <property type="evidence" value="ECO:0007669"/>
    <property type="project" value="UniProtKB-KW"/>
</dbReference>
<dbReference type="GO" id="GO:0005198">
    <property type="term" value="F:structural molecule activity"/>
    <property type="evidence" value="ECO:0007669"/>
    <property type="project" value="InterPro"/>
</dbReference>
<dbReference type="GO" id="GO:0006508">
    <property type="term" value="P:proteolysis"/>
    <property type="evidence" value="ECO:0007669"/>
    <property type="project" value="UniProtKB-KW"/>
</dbReference>
<dbReference type="Gene3D" id="2.60.120.20">
    <property type="match status" value="1"/>
</dbReference>
<dbReference type="Gene3D" id="3.30.230.110">
    <property type="match status" value="1"/>
</dbReference>
<dbReference type="Gene3D" id="6.10.250.1030">
    <property type="match status" value="1"/>
</dbReference>
<dbReference type="Gene3D" id="1.10.8.880">
    <property type="entry name" value="Birnavirus VP3 protein, domain 2"/>
    <property type="match status" value="1"/>
</dbReference>
<dbReference type="Gene3D" id="1.10.150.620">
    <property type="entry name" value="Capsid protein VP3, domain 1"/>
    <property type="match status" value="1"/>
</dbReference>
<dbReference type="Gene3D" id="2.60.120.660">
    <property type="entry name" value="icosahedral virus"/>
    <property type="match status" value="1"/>
</dbReference>
<dbReference type="InterPro" id="IPR002662">
    <property type="entry name" value="Birna_VP2"/>
</dbReference>
<dbReference type="InterPro" id="IPR002663">
    <property type="entry name" value="Birna_VP3"/>
</dbReference>
<dbReference type="InterPro" id="IPR043048">
    <property type="entry name" value="Birna_VP3_dom1"/>
</dbReference>
<dbReference type="InterPro" id="IPR043049">
    <property type="entry name" value="Birna_VP3_dom2"/>
</dbReference>
<dbReference type="InterPro" id="IPR025775">
    <property type="entry name" value="Birna_VP4_Prtase_dom"/>
</dbReference>
<dbReference type="InterPro" id="IPR029053">
    <property type="entry name" value="Viral_coat"/>
</dbReference>
<dbReference type="Pfam" id="PF01766">
    <property type="entry name" value="Birna_VP2"/>
    <property type="match status" value="1"/>
</dbReference>
<dbReference type="Pfam" id="PF01767">
    <property type="entry name" value="Birna_VP3"/>
    <property type="match status" value="1"/>
</dbReference>
<dbReference type="Pfam" id="PF01768">
    <property type="entry name" value="Birna_VP4"/>
    <property type="match status" value="1"/>
</dbReference>
<dbReference type="SUPFAM" id="SSF88633">
    <property type="entry name" value="Positive stranded ssRNA viruses"/>
    <property type="match status" value="1"/>
</dbReference>
<dbReference type="PROSITE" id="PS51548">
    <property type="entry name" value="BIRNAVIRUS_VP4_PRO"/>
    <property type="match status" value="1"/>
</dbReference>